<organism>
    <name type="scientific">Bacillus mycoides (strain KBAB4)</name>
    <name type="common">Bacillus weihenstephanensis</name>
    <dbReference type="NCBI Taxonomy" id="315730"/>
    <lineage>
        <taxon>Bacteria</taxon>
        <taxon>Bacillati</taxon>
        <taxon>Bacillota</taxon>
        <taxon>Bacilli</taxon>
        <taxon>Bacillales</taxon>
        <taxon>Bacillaceae</taxon>
        <taxon>Bacillus</taxon>
        <taxon>Bacillus cereus group</taxon>
    </lineage>
</organism>
<dbReference type="EC" id="6.3.1.5" evidence="1"/>
<dbReference type="EMBL" id="CP000903">
    <property type="protein sequence ID" value="ABY43093.1"/>
    <property type="molecule type" value="Genomic_DNA"/>
</dbReference>
<dbReference type="RefSeq" id="WP_002141379.1">
    <property type="nucleotide sequence ID" value="NC_010184.1"/>
</dbReference>
<dbReference type="SMR" id="A9VRQ8"/>
<dbReference type="KEGG" id="bwe:BcerKBAB4_1861"/>
<dbReference type="eggNOG" id="COG0171">
    <property type="taxonomic scope" value="Bacteria"/>
</dbReference>
<dbReference type="HOGENOM" id="CLU_059327_3_0_9"/>
<dbReference type="UniPathway" id="UPA00253">
    <property type="reaction ID" value="UER00333"/>
</dbReference>
<dbReference type="Proteomes" id="UP000002154">
    <property type="component" value="Chromosome"/>
</dbReference>
<dbReference type="GO" id="GO:0005737">
    <property type="term" value="C:cytoplasm"/>
    <property type="evidence" value="ECO:0007669"/>
    <property type="project" value="InterPro"/>
</dbReference>
<dbReference type="GO" id="GO:0005524">
    <property type="term" value="F:ATP binding"/>
    <property type="evidence" value="ECO:0007669"/>
    <property type="project" value="UniProtKB-UniRule"/>
</dbReference>
<dbReference type="GO" id="GO:0004359">
    <property type="term" value="F:glutaminase activity"/>
    <property type="evidence" value="ECO:0007669"/>
    <property type="project" value="InterPro"/>
</dbReference>
<dbReference type="GO" id="GO:0046872">
    <property type="term" value="F:metal ion binding"/>
    <property type="evidence" value="ECO:0007669"/>
    <property type="project" value="UniProtKB-KW"/>
</dbReference>
<dbReference type="GO" id="GO:0003952">
    <property type="term" value="F:NAD+ synthase (glutamine-hydrolyzing) activity"/>
    <property type="evidence" value="ECO:0007669"/>
    <property type="project" value="InterPro"/>
</dbReference>
<dbReference type="GO" id="GO:0008795">
    <property type="term" value="F:NAD+ synthase activity"/>
    <property type="evidence" value="ECO:0007669"/>
    <property type="project" value="UniProtKB-UniRule"/>
</dbReference>
<dbReference type="GO" id="GO:0009435">
    <property type="term" value="P:NAD biosynthetic process"/>
    <property type="evidence" value="ECO:0007669"/>
    <property type="project" value="UniProtKB-UniRule"/>
</dbReference>
<dbReference type="CDD" id="cd00553">
    <property type="entry name" value="NAD_synthase"/>
    <property type="match status" value="1"/>
</dbReference>
<dbReference type="FunFam" id="3.40.50.620:FF:000015">
    <property type="entry name" value="NH(3)-dependent NAD(+) synthetase"/>
    <property type="match status" value="1"/>
</dbReference>
<dbReference type="Gene3D" id="3.40.50.620">
    <property type="entry name" value="HUPs"/>
    <property type="match status" value="1"/>
</dbReference>
<dbReference type="HAMAP" id="MF_00193">
    <property type="entry name" value="NadE_ammonia_dep"/>
    <property type="match status" value="1"/>
</dbReference>
<dbReference type="InterPro" id="IPR022310">
    <property type="entry name" value="NAD/GMP_synthase"/>
</dbReference>
<dbReference type="InterPro" id="IPR003694">
    <property type="entry name" value="NAD_synthase"/>
</dbReference>
<dbReference type="InterPro" id="IPR022926">
    <property type="entry name" value="NH(3)-dep_NAD(+)_synth"/>
</dbReference>
<dbReference type="InterPro" id="IPR014729">
    <property type="entry name" value="Rossmann-like_a/b/a_fold"/>
</dbReference>
<dbReference type="NCBIfam" id="TIGR00552">
    <property type="entry name" value="nadE"/>
    <property type="match status" value="1"/>
</dbReference>
<dbReference type="NCBIfam" id="NF001979">
    <property type="entry name" value="PRK00768.1"/>
    <property type="match status" value="1"/>
</dbReference>
<dbReference type="PANTHER" id="PTHR23090">
    <property type="entry name" value="NH 3 /GLUTAMINE-DEPENDENT NAD + SYNTHETASE"/>
    <property type="match status" value="1"/>
</dbReference>
<dbReference type="PANTHER" id="PTHR23090:SF7">
    <property type="entry name" value="NH(3)-DEPENDENT NAD(+) SYNTHETASE"/>
    <property type="match status" value="1"/>
</dbReference>
<dbReference type="Pfam" id="PF02540">
    <property type="entry name" value="NAD_synthase"/>
    <property type="match status" value="1"/>
</dbReference>
<dbReference type="SUPFAM" id="SSF52402">
    <property type="entry name" value="Adenine nucleotide alpha hydrolases-like"/>
    <property type="match status" value="1"/>
</dbReference>
<keyword id="KW-0067">ATP-binding</keyword>
<keyword id="KW-0436">Ligase</keyword>
<keyword id="KW-0460">Magnesium</keyword>
<keyword id="KW-0479">Metal-binding</keyword>
<keyword id="KW-0520">NAD</keyword>
<keyword id="KW-0547">Nucleotide-binding</keyword>
<protein>
    <recommendedName>
        <fullName evidence="1">NH(3)-dependent NAD(+) synthetase</fullName>
        <ecNumber evidence="1">6.3.1.5</ecNumber>
    </recommendedName>
</protein>
<reference key="1">
    <citation type="journal article" date="2008" name="Chem. Biol. Interact.">
        <title>Extending the Bacillus cereus group genomics to putative food-borne pathogens of different toxicity.</title>
        <authorList>
            <person name="Lapidus A."/>
            <person name="Goltsman E."/>
            <person name="Auger S."/>
            <person name="Galleron N."/>
            <person name="Segurens B."/>
            <person name="Dossat C."/>
            <person name="Land M.L."/>
            <person name="Broussolle V."/>
            <person name="Brillard J."/>
            <person name="Guinebretiere M.-H."/>
            <person name="Sanchis V."/>
            <person name="Nguen-the C."/>
            <person name="Lereclus D."/>
            <person name="Richardson P."/>
            <person name="Wincker P."/>
            <person name="Weissenbach J."/>
            <person name="Ehrlich S.D."/>
            <person name="Sorokin A."/>
        </authorList>
    </citation>
    <scope>NUCLEOTIDE SEQUENCE [LARGE SCALE GENOMIC DNA]</scope>
    <source>
        <strain>KBAB4</strain>
    </source>
</reference>
<accession>A9VRQ8</accession>
<feature type="chain" id="PRO_1000099000" description="NH(3)-dependent NAD(+) synthetase">
    <location>
        <begin position="1"/>
        <end position="272"/>
    </location>
</feature>
<feature type="binding site" evidence="1">
    <location>
        <begin position="45"/>
        <end position="52"/>
    </location>
    <ligand>
        <name>ATP</name>
        <dbReference type="ChEBI" id="CHEBI:30616"/>
    </ligand>
</feature>
<feature type="binding site" evidence="1">
    <location>
        <position position="51"/>
    </location>
    <ligand>
        <name>Mg(2+)</name>
        <dbReference type="ChEBI" id="CHEBI:18420"/>
    </ligand>
</feature>
<feature type="binding site" evidence="1">
    <location>
        <position position="138"/>
    </location>
    <ligand>
        <name>deamido-NAD(+)</name>
        <dbReference type="ChEBI" id="CHEBI:58437"/>
    </ligand>
</feature>
<feature type="binding site" evidence="1">
    <location>
        <position position="158"/>
    </location>
    <ligand>
        <name>ATP</name>
        <dbReference type="ChEBI" id="CHEBI:30616"/>
    </ligand>
</feature>
<feature type="binding site" evidence="1">
    <location>
        <position position="163"/>
    </location>
    <ligand>
        <name>Mg(2+)</name>
        <dbReference type="ChEBI" id="CHEBI:18420"/>
    </ligand>
</feature>
<feature type="binding site" evidence="1">
    <location>
        <position position="171"/>
    </location>
    <ligand>
        <name>deamido-NAD(+)</name>
        <dbReference type="ChEBI" id="CHEBI:58437"/>
    </ligand>
</feature>
<feature type="binding site" evidence="1">
    <location>
        <position position="178"/>
    </location>
    <ligand>
        <name>deamido-NAD(+)</name>
        <dbReference type="ChEBI" id="CHEBI:58437"/>
    </ligand>
</feature>
<feature type="binding site" evidence="1">
    <location>
        <position position="187"/>
    </location>
    <ligand>
        <name>ATP</name>
        <dbReference type="ChEBI" id="CHEBI:30616"/>
    </ligand>
</feature>
<feature type="binding site" evidence="1">
    <location>
        <position position="209"/>
    </location>
    <ligand>
        <name>ATP</name>
        <dbReference type="ChEBI" id="CHEBI:30616"/>
    </ligand>
</feature>
<feature type="binding site" evidence="1">
    <location>
        <begin position="258"/>
        <end position="259"/>
    </location>
    <ligand>
        <name>deamido-NAD(+)</name>
        <dbReference type="ChEBI" id="CHEBI:58437"/>
    </ligand>
</feature>
<comment type="function">
    <text evidence="1">Catalyzes the ATP-dependent amidation of deamido-NAD to form NAD. Uses ammonia as a nitrogen source.</text>
</comment>
<comment type="catalytic activity">
    <reaction evidence="1">
        <text>deamido-NAD(+) + NH4(+) + ATP = AMP + diphosphate + NAD(+) + H(+)</text>
        <dbReference type="Rhea" id="RHEA:21188"/>
        <dbReference type="ChEBI" id="CHEBI:15378"/>
        <dbReference type="ChEBI" id="CHEBI:28938"/>
        <dbReference type="ChEBI" id="CHEBI:30616"/>
        <dbReference type="ChEBI" id="CHEBI:33019"/>
        <dbReference type="ChEBI" id="CHEBI:57540"/>
        <dbReference type="ChEBI" id="CHEBI:58437"/>
        <dbReference type="ChEBI" id="CHEBI:456215"/>
        <dbReference type="EC" id="6.3.1.5"/>
    </reaction>
</comment>
<comment type="pathway">
    <text evidence="1">Cofactor biosynthesis; NAD(+) biosynthesis; NAD(+) from deamido-NAD(+) (ammonia route): step 1/1.</text>
</comment>
<comment type="subunit">
    <text evidence="1">Homodimer.</text>
</comment>
<comment type="similarity">
    <text evidence="1">Belongs to the NAD synthetase family.</text>
</comment>
<gene>
    <name evidence="1" type="primary">nadE</name>
    <name type="ordered locus">BcerKBAB4_1861</name>
</gene>
<proteinExistence type="inferred from homology"/>
<evidence type="ECO:0000255" key="1">
    <source>
        <dbReference type="HAMAP-Rule" id="MF_00193"/>
    </source>
</evidence>
<sequence>MTLQEQIMKALHVQPVIDPKVEIRKRIDFLKDYLKTTGAKGFVLGISGGQDSTLAGRLAQLAVAEVRNEGGNATFISVRLPYKVQKDEDDAQLALQFIQADQSVAFDIASTVDAFSNQYENLLDESLTDFNKGNVKARIRMVTQYAIGGQQGLLVIGTDHAAEAVTGFFTKFGDGGADLLPLTGLTKRQGRDLLQELGADERLYLKMPTADLLDEKPGQADETELGITYDQLDDYLEGKSVPADVAEKIEKRYKVSEHKRQVPASMFDDWWK</sequence>
<name>NADE_BACMK</name>